<feature type="chain" id="PRO_0000114112" description="Glutamyl-tRNA reductase">
    <location>
        <begin position="1"/>
        <end position="409"/>
    </location>
</feature>
<feature type="active site" description="Nucleophile" evidence="1">
    <location>
        <position position="47"/>
    </location>
</feature>
<feature type="binding site" evidence="1">
    <location>
        <begin position="46"/>
        <end position="49"/>
    </location>
    <ligand>
        <name>substrate</name>
    </ligand>
</feature>
<feature type="binding site" evidence="1">
    <location>
        <position position="88"/>
    </location>
    <ligand>
        <name>substrate</name>
    </ligand>
</feature>
<feature type="binding site" evidence="1">
    <location>
        <begin position="93"/>
        <end position="95"/>
    </location>
    <ligand>
        <name>substrate</name>
    </ligand>
</feature>
<feature type="binding site" evidence="1">
    <location>
        <position position="99"/>
    </location>
    <ligand>
        <name>substrate</name>
    </ligand>
</feature>
<feature type="binding site" evidence="1">
    <location>
        <begin position="164"/>
        <end position="169"/>
    </location>
    <ligand>
        <name>NADP(+)</name>
        <dbReference type="ChEBI" id="CHEBI:58349"/>
    </ligand>
</feature>
<feature type="site" description="Important for activity" evidence="1">
    <location>
        <position position="78"/>
    </location>
</feature>
<sequence length="409" mass="46682">MQILTLISWDFKRNNNFFNQAVLNPYEYWADILEKNGISRYVILLTCNRVEIYLRAGFPEDLEAMKPNVLHDEEAIKHLMEVSSGLDSMSLGENEILKQVKEAYELSVRNGKVDKVLSLIFQKAIFVGKKVRSETEISRGKVSVPSIVYDILSSRVVQKVLIIGNGMIAGEIAPYLSGKFEVTIAGRNIDHVKDLASKYNYSYTTINDLHELIMRNDAIISATSSKTPIIRREEMVEGKLYIDLGNPRNIEDKPGADIITIDDIYSVSNRNGSARMESVDEARRIIEIEMASLMNKIKDVMIDEIFADFYKFAVVVQKMEIEKFSRMHPEIPASDVEAFAHSMINKVMNIPVMTLKSVARSQSNQDFSRIFSKFYDNFSDLVSAALQSYEGRQDTQSLRDRTRRLLQRS</sequence>
<accession>Q9HKR0</accession>
<protein>
    <recommendedName>
        <fullName evidence="1">Glutamyl-tRNA reductase</fullName>
        <shortName evidence="1">GluTR</shortName>
        <ecNumber evidence="1">1.2.1.70</ecNumber>
    </recommendedName>
</protein>
<dbReference type="EC" id="1.2.1.70" evidence="1"/>
<dbReference type="EMBL" id="AL445064">
    <property type="protein sequence ID" value="CAC11676.1"/>
    <property type="molecule type" value="Genomic_DNA"/>
</dbReference>
<dbReference type="SMR" id="Q9HKR0"/>
<dbReference type="FunCoup" id="Q9HKR0">
    <property type="interactions" value="65"/>
</dbReference>
<dbReference type="STRING" id="273075.gene:9571756"/>
<dbReference type="PaxDb" id="273075-Ta0536"/>
<dbReference type="EnsemblBacteria" id="CAC11676">
    <property type="protein sequence ID" value="CAC11676"/>
    <property type="gene ID" value="CAC11676"/>
</dbReference>
<dbReference type="KEGG" id="tac:Ta0536"/>
<dbReference type="eggNOG" id="arCOG01036">
    <property type="taxonomic scope" value="Archaea"/>
</dbReference>
<dbReference type="HOGENOM" id="CLU_035113_2_2_2"/>
<dbReference type="InParanoid" id="Q9HKR0"/>
<dbReference type="OrthoDB" id="4562at2157"/>
<dbReference type="UniPathway" id="UPA00251">
    <property type="reaction ID" value="UER00316"/>
</dbReference>
<dbReference type="Proteomes" id="UP000001024">
    <property type="component" value="Chromosome"/>
</dbReference>
<dbReference type="GO" id="GO:0008883">
    <property type="term" value="F:glutamyl-tRNA reductase activity"/>
    <property type="evidence" value="ECO:0007669"/>
    <property type="project" value="UniProtKB-UniRule"/>
</dbReference>
<dbReference type="GO" id="GO:0050661">
    <property type="term" value="F:NADP binding"/>
    <property type="evidence" value="ECO:0007669"/>
    <property type="project" value="InterPro"/>
</dbReference>
<dbReference type="GO" id="GO:0019353">
    <property type="term" value="P:protoporphyrinogen IX biosynthetic process from glutamate"/>
    <property type="evidence" value="ECO:0007669"/>
    <property type="project" value="TreeGrafter"/>
</dbReference>
<dbReference type="CDD" id="cd05213">
    <property type="entry name" value="NAD_bind_Glutamyl_tRNA_reduct"/>
    <property type="match status" value="1"/>
</dbReference>
<dbReference type="Gene3D" id="3.30.460.30">
    <property type="entry name" value="Glutamyl-tRNA reductase, N-terminal domain"/>
    <property type="match status" value="1"/>
</dbReference>
<dbReference type="Gene3D" id="3.40.50.720">
    <property type="entry name" value="NAD(P)-binding Rossmann-like Domain"/>
    <property type="match status" value="1"/>
</dbReference>
<dbReference type="HAMAP" id="MF_00087">
    <property type="entry name" value="Glu_tRNA_reductase"/>
    <property type="match status" value="1"/>
</dbReference>
<dbReference type="InterPro" id="IPR000343">
    <property type="entry name" value="4pyrrol_synth_GluRdtase"/>
</dbReference>
<dbReference type="InterPro" id="IPR015896">
    <property type="entry name" value="4pyrrol_synth_GluRdtase_dimer"/>
</dbReference>
<dbReference type="InterPro" id="IPR015895">
    <property type="entry name" value="4pyrrol_synth_GluRdtase_N"/>
</dbReference>
<dbReference type="InterPro" id="IPR018214">
    <property type="entry name" value="GluRdtase_CS"/>
</dbReference>
<dbReference type="InterPro" id="IPR036453">
    <property type="entry name" value="GluRdtase_dimer_dom_sf"/>
</dbReference>
<dbReference type="InterPro" id="IPR036343">
    <property type="entry name" value="GluRdtase_N_sf"/>
</dbReference>
<dbReference type="InterPro" id="IPR036291">
    <property type="entry name" value="NAD(P)-bd_dom_sf"/>
</dbReference>
<dbReference type="InterPro" id="IPR006151">
    <property type="entry name" value="Shikm_DH/Glu-tRNA_Rdtase"/>
</dbReference>
<dbReference type="NCBIfam" id="TIGR01035">
    <property type="entry name" value="hemA"/>
    <property type="match status" value="1"/>
</dbReference>
<dbReference type="PANTHER" id="PTHR43013">
    <property type="entry name" value="GLUTAMYL-TRNA REDUCTASE"/>
    <property type="match status" value="1"/>
</dbReference>
<dbReference type="PANTHER" id="PTHR43013:SF1">
    <property type="entry name" value="GLUTAMYL-TRNA REDUCTASE"/>
    <property type="match status" value="1"/>
</dbReference>
<dbReference type="Pfam" id="PF00745">
    <property type="entry name" value="GlutR_dimer"/>
    <property type="match status" value="1"/>
</dbReference>
<dbReference type="Pfam" id="PF05201">
    <property type="entry name" value="GlutR_N"/>
    <property type="match status" value="1"/>
</dbReference>
<dbReference type="Pfam" id="PF01488">
    <property type="entry name" value="Shikimate_DH"/>
    <property type="match status" value="1"/>
</dbReference>
<dbReference type="PIRSF" id="PIRSF000445">
    <property type="entry name" value="4pyrrol_synth_GluRdtase"/>
    <property type="match status" value="1"/>
</dbReference>
<dbReference type="SUPFAM" id="SSF69742">
    <property type="entry name" value="Glutamyl tRNA-reductase catalytic, N-terminal domain"/>
    <property type="match status" value="1"/>
</dbReference>
<dbReference type="SUPFAM" id="SSF69075">
    <property type="entry name" value="Glutamyl tRNA-reductase dimerization domain"/>
    <property type="match status" value="1"/>
</dbReference>
<dbReference type="SUPFAM" id="SSF51735">
    <property type="entry name" value="NAD(P)-binding Rossmann-fold domains"/>
    <property type="match status" value="1"/>
</dbReference>
<dbReference type="PROSITE" id="PS00747">
    <property type="entry name" value="GLUTR"/>
    <property type="match status" value="1"/>
</dbReference>
<comment type="function">
    <text evidence="1">Catalyzes the NADPH-dependent reduction of glutamyl-tRNA(Glu) to glutamate 1-semialdehyde (GSA).</text>
</comment>
<comment type="catalytic activity">
    <reaction evidence="1">
        <text>(S)-4-amino-5-oxopentanoate + tRNA(Glu) + NADP(+) = L-glutamyl-tRNA(Glu) + NADPH + H(+)</text>
        <dbReference type="Rhea" id="RHEA:12344"/>
        <dbReference type="Rhea" id="RHEA-COMP:9663"/>
        <dbReference type="Rhea" id="RHEA-COMP:9680"/>
        <dbReference type="ChEBI" id="CHEBI:15378"/>
        <dbReference type="ChEBI" id="CHEBI:57501"/>
        <dbReference type="ChEBI" id="CHEBI:57783"/>
        <dbReference type="ChEBI" id="CHEBI:58349"/>
        <dbReference type="ChEBI" id="CHEBI:78442"/>
        <dbReference type="ChEBI" id="CHEBI:78520"/>
        <dbReference type="EC" id="1.2.1.70"/>
    </reaction>
</comment>
<comment type="pathway">
    <text evidence="1">Porphyrin-containing compound metabolism; protoporphyrin-IX biosynthesis; 5-aminolevulinate from L-glutamyl-tRNA(Glu): step 1/2.</text>
</comment>
<comment type="subunit">
    <text evidence="1">Homodimer.</text>
</comment>
<comment type="domain">
    <text evidence="1">Possesses an unusual extended V-shaped dimeric structure with each monomer consisting of three distinct domains arranged along a curved 'spinal' alpha-helix. The N-terminal catalytic domain specifically recognizes the glutamate moiety of the substrate. The second domain is the NADPH-binding domain, and the third C-terminal domain is responsible for dimerization.</text>
</comment>
<comment type="miscellaneous">
    <text evidence="1">During catalysis, the active site Cys acts as a nucleophile attacking the alpha-carbonyl group of tRNA-bound glutamate with the formation of a thioester intermediate between enzyme and glutamate, and the concomitant release of tRNA(Glu). The thioester intermediate is finally reduced by direct hydride transfer from NADPH, to form the product GSA.</text>
</comment>
<comment type="similarity">
    <text evidence="1">Belongs to the glutamyl-tRNA reductase family.</text>
</comment>
<reference key="1">
    <citation type="journal article" date="2000" name="Nature">
        <title>The genome sequence of the thermoacidophilic scavenger Thermoplasma acidophilum.</title>
        <authorList>
            <person name="Ruepp A."/>
            <person name="Graml W."/>
            <person name="Santos-Martinez M.-L."/>
            <person name="Koretke K.K."/>
            <person name="Volker C."/>
            <person name="Mewes H.-W."/>
            <person name="Frishman D."/>
            <person name="Stocker S."/>
            <person name="Lupas A.N."/>
            <person name="Baumeister W."/>
        </authorList>
    </citation>
    <scope>NUCLEOTIDE SEQUENCE [LARGE SCALE GENOMIC DNA]</scope>
    <source>
        <strain>ATCC 25905 / DSM 1728 / JCM 9062 / NBRC 15155 / AMRC-C165</strain>
    </source>
</reference>
<proteinExistence type="inferred from homology"/>
<organism>
    <name type="scientific">Thermoplasma acidophilum (strain ATCC 25905 / DSM 1728 / JCM 9062 / NBRC 15155 / AMRC-C165)</name>
    <dbReference type="NCBI Taxonomy" id="273075"/>
    <lineage>
        <taxon>Archaea</taxon>
        <taxon>Methanobacteriati</taxon>
        <taxon>Thermoplasmatota</taxon>
        <taxon>Thermoplasmata</taxon>
        <taxon>Thermoplasmatales</taxon>
        <taxon>Thermoplasmataceae</taxon>
        <taxon>Thermoplasma</taxon>
    </lineage>
</organism>
<evidence type="ECO:0000255" key="1">
    <source>
        <dbReference type="HAMAP-Rule" id="MF_00087"/>
    </source>
</evidence>
<keyword id="KW-0521">NADP</keyword>
<keyword id="KW-0560">Oxidoreductase</keyword>
<keyword id="KW-0627">Porphyrin biosynthesis</keyword>
<keyword id="KW-1185">Reference proteome</keyword>
<gene>
    <name evidence="1" type="primary">hemA</name>
    <name type="ordered locus">Ta0536</name>
</gene>
<name>HEM1_THEAC</name>